<evidence type="ECO:0000250" key="1"/>
<evidence type="ECO:0000255" key="2">
    <source>
        <dbReference type="PROSITE-ProRule" id="PRU00134"/>
    </source>
</evidence>
<evidence type="ECO:0000256" key="3">
    <source>
        <dbReference type="SAM" id="MobiDB-lite"/>
    </source>
</evidence>
<evidence type="ECO:0000305" key="4"/>
<comment type="function">
    <text evidence="1">Involved in determination of the onset of polarized growth and morphogenesis. Plays a role in the regulation of branching in hyphae and spore formation (By similarity).</text>
</comment>
<comment type="subcellular location">
    <subcellularLocation>
        <location evidence="1">Cytoplasm</location>
    </subcellularLocation>
</comment>
<comment type="similarity">
    <text evidence="4">Belongs to the MUB1/samB family.</text>
</comment>
<protein>
    <recommendedName>
        <fullName>MYND-type zinc finger protein samB</fullName>
    </recommendedName>
    <alternativeName>
        <fullName>Suppressor of anucleate metulae protein B</fullName>
    </alternativeName>
</protein>
<gene>
    <name type="primary">samB</name>
    <name type="ORF">AO090120000340</name>
</gene>
<feature type="chain" id="PRO_0000393326" description="MYND-type zinc finger protein samB">
    <location>
        <begin position="1"/>
        <end position="605"/>
    </location>
</feature>
<feature type="zinc finger region" description="MYND-type; degenerate" evidence="2">
    <location>
        <begin position="560"/>
        <end position="601"/>
    </location>
</feature>
<feature type="region of interest" description="Disordered" evidence="3">
    <location>
        <begin position="133"/>
        <end position="241"/>
    </location>
</feature>
<feature type="region of interest" description="Disordered" evidence="3">
    <location>
        <begin position="274"/>
        <end position="349"/>
    </location>
</feature>
<feature type="compositionally biased region" description="Polar residues" evidence="3">
    <location>
        <begin position="189"/>
        <end position="206"/>
    </location>
</feature>
<feature type="compositionally biased region" description="Basic residues" evidence="3">
    <location>
        <begin position="226"/>
        <end position="241"/>
    </location>
</feature>
<feature type="compositionally biased region" description="Polar residues" evidence="3">
    <location>
        <begin position="279"/>
        <end position="306"/>
    </location>
</feature>
<feature type="binding site" evidence="2">
    <location>
        <position position="576"/>
    </location>
    <ligand>
        <name>Zn(2+)</name>
        <dbReference type="ChEBI" id="CHEBI:29105"/>
    </ligand>
</feature>
<feature type="binding site" evidence="2">
    <location>
        <position position="579"/>
    </location>
    <ligand>
        <name>Zn(2+)</name>
        <dbReference type="ChEBI" id="CHEBI:29105"/>
    </ligand>
</feature>
<feature type="binding site" evidence="2">
    <location>
        <position position="597"/>
    </location>
    <ligand>
        <name>Zn(2+)</name>
        <dbReference type="ChEBI" id="CHEBI:29105"/>
    </ligand>
</feature>
<feature type="binding site" evidence="2">
    <location>
        <position position="601"/>
    </location>
    <ligand>
        <name>Zn(2+)</name>
        <dbReference type="ChEBI" id="CHEBI:29105"/>
    </ligand>
</feature>
<organism>
    <name type="scientific">Aspergillus oryzae (strain ATCC 42149 / RIB 40)</name>
    <name type="common">Yellow koji mold</name>
    <dbReference type="NCBI Taxonomy" id="510516"/>
    <lineage>
        <taxon>Eukaryota</taxon>
        <taxon>Fungi</taxon>
        <taxon>Dikarya</taxon>
        <taxon>Ascomycota</taxon>
        <taxon>Pezizomycotina</taxon>
        <taxon>Eurotiomycetes</taxon>
        <taxon>Eurotiomycetidae</taxon>
        <taxon>Eurotiales</taxon>
        <taxon>Aspergillaceae</taxon>
        <taxon>Aspergillus</taxon>
        <taxon>Aspergillus subgen. Circumdati</taxon>
    </lineage>
</organism>
<proteinExistence type="inferred from homology"/>
<reference key="1">
    <citation type="journal article" date="2005" name="Nature">
        <title>Genome sequencing and analysis of Aspergillus oryzae.</title>
        <authorList>
            <person name="Machida M."/>
            <person name="Asai K."/>
            <person name="Sano M."/>
            <person name="Tanaka T."/>
            <person name="Kumagai T."/>
            <person name="Terai G."/>
            <person name="Kusumoto K."/>
            <person name="Arima T."/>
            <person name="Akita O."/>
            <person name="Kashiwagi Y."/>
            <person name="Abe K."/>
            <person name="Gomi K."/>
            <person name="Horiuchi H."/>
            <person name="Kitamoto K."/>
            <person name="Kobayashi T."/>
            <person name="Takeuchi M."/>
            <person name="Denning D.W."/>
            <person name="Galagan J.E."/>
            <person name="Nierman W.C."/>
            <person name="Yu J."/>
            <person name="Archer D.B."/>
            <person name="Bennett J.W."/>
            <person name="Bhatnagar D."/>
            <person name="Cleveland T.E."/>
            <person name="Fedorova N.D."/>
            <person name="Gotoh O."/>
            <person name="Horikawa H."/>
            <person name="Hosoyama A."/>
            <person name="Ichinomiya M."/>
            <person name="Igarashi R."/>
            <person name="Iwashita K."/>
            <person name="Juvvadi P.R."/>
            <person name="Kato M."/>
            <person name="Kato Y."/>
            <person name="Kin T."/>
            <person name="Kokubun A."/>
            <person name="Maeda H."/>
            <person name="Maeyama N."/>
            <person name="Maruyama J."/>
            <person name="Nagasaki H."/>
            <person name="Nakajima T."/>
            <person name="Oda K."/>
            <person name="Okada K."/>
            <person name="Paulsen I."/>
            <person name="Sakamoto K."/>
            <person name="Sawano T."/>
            <person name="Takahashi M."/>
            <person name="Takase K."/>
            <person name="Terabayashi Y."/>
            <person name="Wortman J.R."/>
            <person name="Yamada O."/>
            <person name="Yamagata Y."/>
            <person name="Anazawa H."/>
            <person name="Hata Y."/>
            <person name="Koide Y."/>
            <person name="Komori T."/>
            <person name="Koyama Y."/>
            <person name="Minetoki T."/>
            <person name="Suharnan S."/>
            <person name="Tanaka A."/>
            <person name="Isono K."/>
            <person name="Kuhara S."/>
            <person name="Ogasawara N."/>
            <person name="Kikuchi H."/>
        </authorList>
    </citation>
    <scope>NUCLEOTIDE SEQUENCE [LARGE SCALE GENOMIC DNA]</scope>
    <source>
        <strain>ATCC 42149 / RIB 40</strain>
    </source>
</reference>
<sequence>MREVNFSIPNVNKASVNITTTLYDRRALDCTSTLPLINSLNHLAYLTTSSARIRDILTVDGGIERLVCILKEGRSRDLMEMWKWSLAFQCVVNIGVRGSESVRTRVVEADMVPVIATILDNYIKVVDKARARADSENQRHSSRHHPKAAPAAGDVTGRPSFPDQSSNSEQRTSRRQAPPPSIEIPAFLHQNTNAPDTNAMDVTSSPRAPMTSPPERSTFGQEAHIHRSHDGRHLHTGHRHRAMQPLATALPPMDTADGFGLRPVRDTERLPSMLPTLHNGITSQPDSPTTPNGPVQPRSHAQTSAARQRPTLRQQQSASGDSDDGNGEGSTLGDNAGSAETSEPIVGLQNEMEIDEVSDRQTMIDGVSNSHDLTVTDPSESQEAETFNISHRSTVDGSIINNDTTQTNTALGLSPTQAANNANSPALVPSPYTLYFRDRSAVPQNVLTTMPRDEDVLMSLQLLAYVSKYCNLRSYFQHSHLVPKLKVDRELQMLEEGASPIEPPEEEEEYMLPDDVNIFPLVEKFTVRHHSKDMQYWACVVMRNLCRKDESRGGIRQCAYYKCGKWEEFQRQFAKCRRCRRTKYCSKDCQKAAWVYHRHWCHTTP</sequence>
<keyword id="KW-0963">Cytoplasm</keyword>
<keyword id="KW-0479">Metal-binding</keyword>
<keyword id="KW-1185">Reference proteome</keyword>
<keyword id="KW-0749">Sporulation</keyword>
<keyword id="KW-0862">Zinc</keyword>
<keyword id="KW-0863">Zinc-finger</keyword>
<dbReference type="EMBL" id="BA000053">
    <property type="protein sequence ID" value="BAE62930.1"/>
    <property type="molecule type" value="Genomic_DNA"/>
</dbReference>
<dbReference type="RefSeq" id="XP_001824063.1">
    <property type="nucleotide sequence ID" value="XM_001824011.2"/>
</dbReference>
<dbReference type="SMR" id="Q2U685"/>
<dbReference type="EnsemblFungi" id="BAE62930">
    <property type="protein sequence ID" value="BAE62930"/>
    <property type="gene ID" value="AO090120000340"/>
</dbReference>
<dbReference type="GeneID" id="5996322"/>
<dbReference type="KEGG" id="aor:AO090120000340"/>
<dbReference type="VEuPathDB" id="FungiDB:AO090120000340"/>
<dbReference type="HOGENOM" id="CLU_014851_0_0_1"/>
<dbReference type="OMA" id="QDMQYWA"/>
<dbReference type="OrthoDB" id="28295at5052"/>
<dbReference type="Proteomes" id="UP000006564">
    <property type="component" value="Chromosome 5"/>
</dbReference>
<dbReference type="GO" id="GO:0005737">
    <property type="term" value="C:cytoplasm"/>
    <property type="evidence" value="ECO:0007669"/>
    <property type="project" value="UniProtKB-SubCell"/>
</dbReference>
<dbReference type="GO" id="GO:1990304">
    <property type="term" value="C:MUB1-RAD6-UBR2 ubiquitin ligase complex"/>
    <property type="evidence" value="ECO:0007669"/>
    <property type="project" value="TreeGrafter"/>
</dbReference>
<dbReference type="GO" id="GO:0008270">
    <property type="term" value="F:zinc ion binding"/>
    <property type="evidence" value="ECO:0007669"/>
    <property type="project" value="UniProtKB-KW"/>
</dbReference>
<dbReference type="GO" id="GO:0007163">
    <property type="term" value="P:establishment or maintenance of cell polarity"/>
    <property type="evidence" value="ECO:0007669"/>
    <property type="project" value="TreeGrafter"/>
</dbReference>
<dbReference type="GO" id="GO:1900735">
    <property type="term" value="P:positive regulation of flocculation"/>
    <property type="evidence" value="ECO:0007669"/>
    <property type="project" value="EnsemblFungi"/>
</dbReference>
<dbReference type="GO" id="GO:0030435">
    <property type="term" value="P:sporulation resulting in formation of a cellular spore"/>
    <property type="evidence" value="ECO:0007669"/>
    <property type="project" value="UniProtKB-KW"/>
</dbReference>
<dbReference type="GO" id="GO:0006511">
    <property type="term" value="P:ubiquitin-dependent protein catabolic process"/>
    <property type="evidence" value="ECO:0007669"/>
    <property type="project" value="TreeGrafter"/>
</dbReference>
<dbReference type="FunFam" id="6.10.140.2220:FF:000003">
    <property type="entry name" value="MYND-type zinc finger protein"/>
    <property type="match status" value="1"/>
</dbReference>
<dbReference type="Gene3D" id="6.10.140.2220">
    <property type="match status" value="1"/>
</dbReference>
<dbReference type="InterPro" id="IPR016024">
    <property type="entry name" value="ARM-type_fold"/>
</dbReference>
<dbReference type="InterPro" id="IPR051664">
    <property type="entry name" value="MYND-type_zinc_finger"/>
</dbReference>
<dbReference type="InterPro" id="IPR002893">
    <property type="entry name" value="Znf_MYND"/>
</dbReference>
<dbReference type="PANTHER" id="PTHR47442">
    <property type="entry name" value="MYND-TYPE ZINC FINGER PROTEIN MUB1"/>
    <property type="match status" value="1"/>
</dbReference>
<dbReference type="PANTHER" id="PTHR47442:SF1">
    <property type="entry name" value="MYND-TYPE ZINC FINGER PROTEIN MUB1"/>
    <property type="match status" value="1"/>
</dbReference>
<dbReference type="Pfam" id="PF01753">
    <property type="entry name" value="zf-MYND"/>
    <property type="match status" value="1"/>
</dbReference>
<dbReference type="SUPFAM" id="SSF48371">
    <property type="entry name" value="ARM repeat"/>
    <property type="match status" value="1"/>
</dbReference>
<dbReference type="SUPFAM" id="SSF144232">
    <property type="entry name" value="HIT/MYND zinc finger-like"/>
    <property type="match status" value="1"/>
</dbReference>
<dbReference type="PROSITE" id="PS01360">
    <property type="entry name" value="ZF_MYND_1"/>
    <property type="match status" value="1"/>
</dbReference>
<dbReference type="PROSITE" id="PS50865">
    <property type="entry name" value="ZF_MYND_2"/>
    <property type="match status" value="1"/>
</dbReference>
<accession>Q2U685</accession>
<name>MUB1_ASPOR</name>